<proteinExistence type="inferred from homology"/>
<accession>B8CWW0</accession>
<feature type="chain" id="PRO_1000195979" description="Large ribosomal subunit protein bL32">
    <location>
        <begin position="1"/>
        <end position="57"/>
    </location>
</feature>
<evidence type="ECO:0000255" key="1">
    <source>
        <dbReference type="HAMAP-Rule" id="MF_00340"/>
    </source>
</evidence>
<evidence type="ECO:0000305" key="2"/>
<name>RL32_HALOH</name>
<gene>
    <name evidence="1" type="primary">rpmF</name>
    <name type="ordered locus">Hore_10230</name>
</gene>
<reference key="1">
    <citation type="journal article" date="2009" name="PLoS ONE">
        <title>Genome analysis of the anaerobic thermohalophilic bacterium Halothermothrix orenii.</title>
        <authorList>
            <person name="Mavromatis K."/>
            <person name="Ivanova N."/>
            <person name="Anderson I."/>
            <person name="Lykidis A."/>
            <person name="Hooper S.D."/>
            <person name="Sun H."/>
            <person name="Kunin V."/>
            <person name="Lapidus A."/>
            <person name="Hugenholtz P."/>
            <person name="Patel B."/>
            <person name="Kyrpides N.C."/>
        </authorList>
    </citation>
    <scope>NUCLEOTIDE SEQUENCE [LARGE SCALE GENOMIC DNA]</scope>
    <source>
        <strain>H 168 / OCM 544 / DSM 9562</strain>
    </source>
</reference>
<sequence length="57" mass="6749">MAVPKRRTSKARKRKRRTHWKLKSPNLVECPQCHELKLSHRVCPSCGYYKGREVVSK</sequence>
<dbReference type="EMBL" id="CP001098">
    <property type="protein sequence ID" value="ACL69779.1"/>
    <property type="molecule type" value="Genomic_DNA"/>
</dbReference>
<dbReference type="RefSeq" id="WP_012635964.1">
    <property type="nucleotide sequence ID" value="NC_011899.1"/>
</dbReference>
<dbReference type="SMR" id="B8CWW0"/>
<dbReference type="STRING" id="373903.Hore_10230"/>
<dbReference type="KEGG" id="hor:Hore_10230"/>
<dbReference type="eggNOG" id="COG0333">
    <property type="taxonomic scope" value="Bacteria"/>
</dbReference>
<dbReference type="HOGENOM" id="CLU_129084_1_3_9"/>
<dbReference type="OrthoDB" id="9812874at2"/>
<dbReference type="Proteomes" id="UP000000719">
    <property type="component" value="Chromosome"/>
</dbReference>
<dbReference type="GO" id="GO:0015934">
    <property type="term" value="C:large ribosomal subunit"/>
    <property type="evidence" value="ECO:0007669"/>
    <property type="project" value="InterPro"/>
</dbReference>
<dbReference type="GO" id="GO:0003735">
    <property type="term" value="F:structural constituent of ribosome"/>
    <property type="evidence" value="ECO:0007669"/>
    <property type="project" value="InterPro"/>
</dbReference>
<dbReference type="GO" id="GO:0006412">
    <property type="term" value="P:translation"/>
    <property type="evidence" value="ECO:0007669"/>
    <property type="project" value="UniProtKB-UniRule"/>
</dbReference>
<dbReference type="HAMAP" id="MF_00340">
    <property type="entry name" value="Ribosomal_bL32"/>
    <property type="match status" value="1"/>
</dbReference>
<dbReference type="InterPro" id="IPR002677">
    <property type="entry name" value="Ribosomal_bL32"/>
</dbReference>
<dbReference type="InterPro" id="IPR044957">
    <property type="entry name" value="Ribosomal_bL32_bact"/>
</dbReference>
<dbReference type="InterPro" id="IPR011332">
    <property type="entry name" value="Ribosomal_zn-bd"/>
</dbReference>
<dbReference type="NCBIfam" id="TIGR01031">
    <property type="entry name" value="rpmF_bact"/>
    <property type="match status" value="1"/>
</dbReference>
<dbReference type="PANTHER" id="PTHR35534">
    <property type="entry name" value="50S RIBOSOMAL PROTEIN L32"/>
    <property type="match status" value="1"/>
</dbReference>
<dbReference type="PANTHER" id="PTHR35534:SF2">
    <property type="entry name" value="LARGE RIBOSOMAL SUBUNIT PROTEIN BL32"/>
    <property type="match status" value="1"/>
</dbReference>
<dbReference type="Pfam" id="PF01783">
    <property type="entry name" value="Ribosomal_L32p"/>
    <property type="match status" value="1"/>
</dbReference>
<dbReference type="SUPFAM" id="SSF57829">
    <property type="entry name" value="Zn-binding ribosomal proteins"/>
    <property type="match status" value="1"/>
</dbReference>
<keyword id="KW-1185">Reference proteome</keyword>
<keyword id="KW-0687">Ribonucleoprotein</keyword>
<keyword id="KW-0689">Ribosomal protein</keyword>
<organism>
    <name type="scientific">Halothermothrix orenii (strain H 168 / OCM 544 / DSM 9562)</name>
    <dbReference type="NCBI Taxonomy" id="373903"/>
    <lineage>
        <taxon>Bacteria</taxon>
        <taxon>Bacillati</taxon>
        <taxon>Bacillota</taxon>
        <taxon>Clostridia</taxon>
        <taxon>Halanaerobiales</taxon>
        <taxon>Halothermotrichaceae</taxon>
        <taxon>Halothermothrix</taxon>
    </lineage>
</organism>
<comment type="similarity">
    <text evidence="1">Belongs to the bacterial ribosomal protein bL32 family.</text>
</comment>
<protein>
    <recommendedName>
        <fullName evidence="1">Large ribosomal subunit protein bL32</fullName>
    </recommendedName>
    <alternativeName>
        <fullName evidence="2">50S ribosomal protein L32</fullName>
    </alternativeName>
</protein>